<comment type="subcellular location">
    <subcellularLocation>
        <location evidence="1">Cell inner membrane</location>
        <topology evidence="1">Multi-pass membrane protein</topology>
    </subcellularLocation>
</comment>
<comment type="similarity">
    <text evidence="1">Belongs to the major facilitator superfamily. DHA1 family. MdtH (TC 2.A.1.2.21) subfamily.</text>
</comment>
<sequence length="402" mass="43883">MSRVSQARNLGKYFLLVDNMLVVLGFFVVFPLISIRFVDQMGWAALMVGIALGLRQFVQQGLGVFGGAIADRFGAKPMIVTGMLLRAAGFATMGIAHDPWLLWFSCFLSGLGGTLFDPPRTALVVKLIRPRQRGRFFSLLMMQDSAGAVIGALLGSWLLQYDFRLVCATGAALFILCAAFNAWLLPAWKLSTVKAPVREGLGRVMADKRFVTYVLTLTGYYMLAVQVMLMLPIMVNDIAGSPAAVKWMYAIEACLSLTLLYPIARWSEKRFRLEHRLMAGLLVMTLSMMPIGLVSSVQQLFVLICTFYIGSIIAEPARETLGAGLADPRARGSYMGFSRLGLALGGALGYAGGGWLFDSGKAMNQSELPWVMLGVVGFITLIALWWQFSPKRSASGMLEPGA</sequence>
<protein>
    <recommendedName>
        <fullName evidence="1">Multidrug resistance protein MdtH</fullName>
    </recommendedName>
</protein>
<proteinExistence type="inferred from homology"/>
<evidence type="ECO:0000255" key="1">
    <source>
        <dbReference type="HAMAP-Rule" id="MF_01529"/>
    </source>
</evidence>
<dbReference type="EMBL" id="CP000653">
    <property type="protein sequence ID" value="ABP60258.1"/>
    <property type="molecule type" value="Genomic_DNA"/>
</dbReference>
<dbReference type="RefSeq" id="WP_012016975.1">
    <property type="nucleotide sequence ID" value="NC_009436.1"/>
</dbReference>
<dbReference type="SMR" id="A4W978"/>
<dbReference type="STRING" id="399742.Ent638_1579"/>
<dbReference type="KEGG" id="ent:Ent638_1579"/>
<dbReference type="eggNOG" id="COG0477">
    <property type="taxonomic scope" value="Bacteria"/>
</dbReference>
<dbReference type="HOGENOM" id="CLU_001265_60_2_6"/>
<dbReference type="OrthoDB" id="56516at2"/>
<dbReference type="Proteomes" id="UP000000230">
    <property type="component" value="Chromosome"/>
</dbReference>
<dbReference type="GO" id="GO:0005886">
    <property type="term" value="C:plasma membrane"/>
    <property type="evidence" value="ECO:0007669"/>
    <property type="project" value="UniProtKB-SubCell"/>
</dbReference>
<dbReference type="GO" id="GO:0022857">
    <property type="term" value="F:transmembrane transporter activity"/>
    <property type="evidence" value="ECO:0007669"/>
    <property type="project" value="UniProtKB-UniRule"/>
</dbReference>
<dbReference type="CDD" id="cd17329">
    <property type="entry name" value="MFS_MdtH_MDR_like"/>
    <property type="match status" value="1"/>
</dbReference>
<dbReference type="Gene3D" id="1.20.1250.20">
    <property type="entry name" value="MFS general substrate transporter like domains"/>
    <property type="match status" value="1"/>
</dbReference>
<dbReference type="HAMAP" id="MF_01529">
    <property type="entry name" value="MFS_MdtH"/>
    <property type="match status" value="1"/>
</dbReference>
<dbReference type="InterPro" id="IPR011701">
    <property type="entry name" value="MFS"/>
</dbReference>
<dbReference type="InterPro" id="IPR020846">
    <property type="entry name" value="MFS_dom"/>
</dbReference>
<dbReference type="InterPro" id="IPR036259">
    <property type="entry name" value="MFS_trans_sf"/>
</dbReference>
<dbReference type="InterPro" id="IPR050171">
    <property type="entry name" value="MFS_Transporters"/>
</dbReference>
<dbReference type="InterPro" id="IPR022855">
    <property type="entry name" value="Multidrug-R_MdtH"/>
</dbReference>
<dbReference type="NCBIfam" id="NF008650">
    <property type="entry name" value="PRK11646.1"/>
    <property type="match status" value="1"/>
</dbReference>
<dbReference type="PANTHER" id="PTHR23517:SF2">
    <property type="entry name" value="MULTIDRUG RESISTANCE PROTEIN MDTH"/>
    <property type="match status" value="1"/>
</dbReference>
<dbReference type="PANTHER" id="PTHR23517">
    <property type="entry name" value="RESISTANCE PROTEIN MDTM, PUTATIVE-RELATED-RELATED"/>
    <property type="match status" value="1"/>
</dbReference>
<dbReference type="Pfam" id="PF07690">
    <property type="entry name" value="MFS_1"/>
    <property type="match status" value="2"/>
</dbReference>
<dbReference type="SUPFAM" id="SSF103473">
    <property type="entry name" value="MFS general substrate transporter"/>
    <property type="match status" value="1"/>
</dbReference>
<dbReference type="PROSITE" id="PS50850">
    <property type="entry name" value="MFS"/>
    <property type="match status" value="1"/>
</dbReference>
<gene>
    <name evidence="1" type="primary">mdtH</name>
    <name type="ordered locus">Ent638_1579</name>
</gene>
<organism>
    <name type="scientific">Enterobacter sp. (strain 638)</name>
    <dbReference type="NCBI Taxonomy" id="399742"/>
    <lineage>
        <taxon>Bacteria</taxon>
        <taxon>Pseudomonadati</taxon>
        <taxon>Pseudomonadota</taxon>
        <taxon>Gammaproteobacteria</taxon>
        <taxon>Enterobacterales</taxon>
        <taxon>Enterobacteriaceae</taxon>
        <taxon>Enterobacter</taxon>
    </lineage>
</organism>
<feature type="chain" id="PRO_1000068678" description="Multidrug resistance protein MdtH">
    <location>
        <begin position="1"/>
        <end position="402"/>
    </location>
</feature>
<feature type="transmembrane region" description="Helical" evidence="1">
    <location>
        <begin position="13"/>
        <end position="33"/>
    </location>
</feature>
<feature type="transmembrane region" description="Helical" evidence="1">
    <location>
        <begin position="34"/>
        <end position="54"/>
    </location>
</feature>
<feature type="transmembrane region" description="Helical" evidence="1">
    <location>
        <begin position="99"/>
        <end position="116"/>
    </location>
</feature>
<feature type="transmembrane region" description="Helical" evidence="1">
    <location>
        <begin position="139"/>
        <end position="159"/>
    </location>
</feature>
<feature type="transmembrane region" description="Helical" evidence="1">
    <location>
        <begin position="165"/>
        <end position="185"/>
    </location>
</feature>
<feature type="transmembrane region" description="Helical" evidence="1">
    <location>
        <begin position="214"/>
        <end position="234"/>
    </location>
</feature>
<feature type="transmembrane region" description="Helical" evidence="1">
    <location>
        <begin position="243"/>
        <end position="263"/>
    </location>
</feature>
<feature type="transmembrane region" description="Helical" evidence="1">
    <location>
        <begin position="277"/>
        <end position="297"/>
    </location>
</feature>
<feature type="transmembrane region" description="Helical" evidence="1">
    <location>
        <begin position="300"/>
        <end position="320"/>
    </location>
</feature>
<feature type="transmembrane region" description="Helical" evidence="1">
    <location>
        <begin position="340"/>
        <end position="360"/>
    </location>
</feature>
<feature type="transmembrane region" description="Helical" evidence="1">
    <location>
        <begin position="368"/>
        <end position="388"/>
    </location>
</feature>
<accession>A4W978</accession>
<keyword id="KW-0997">Cell inner membrane</keyword>
<keyword id="KW-1003">Cell membrane</keyword>
<keyword id="KW-0472">Membrane</keyword>
<keyword id="KW-0812">Transmembrane</keyword>
<keyword id="KW-1133">Transmembrane helix</keyword>
<keyword id="KW-0813">Transport</keyword>
<reference key="1">
    <citation type="journal article" date="2010" name="PLoS Genet.">
        <title>Genome sequence of the plant growth promoting endophytic bacterium Enterobacter sp. 638.</title>
        <authorList>
            <person name="Taghavi S."/>
            <person name="van der Lelie D."/>
            <person name="Hoffman A."/>
            <person name="Zhang Y.B."/>
            <person name="Walla M.D."/>
            <person name="Vangronsveld J."/>
            <person name="Newman L."/>
            <person name="Monchy S."/>
        </authorList>
    </citation>
    <scope>NUCLEOTIDE SEQUENCE [LARGE SCALE GENOMIC DNA]</scope>
    <source>
        <strain>638</strain>
    </source>
</reference>
<name>MDTH_ENT38</name>